<evidence type="ECO:0000250" key="1">
    <source>
        <dbReference type="UniProtKB" id="D3WAC3"/>
    </source>
</evidence>
<evidence type="ECO:0000305" key="2"/>
<reference key="1">
    <citation type="journal article" date="1997" name="Mol. Microbiol.">
        <title>Analysis of the DNA sequence, gene expression, origin of replication and modular structure of the Lactococcus lactis lytic bacteriophage sk1.</title>
        <authorList>
            <person name="Chandry P.S."/>
            <person name="Moore S.C."/>
            <person name="Boyce J.D."/>
            <person name="Davidson B.E."/>
            <person name="Hillier A.J."/>
        </authorList>
    </citation>
    <scope>NUCLEOTIDE SEQUENCE [LARGE SCALE GENOMIC DNA]</scope>
</reference>
<dbReference type="EMBL" id="AF011378">
    <property type="protein sequence ID" value="AAB70043.1"/>
    <property type="molecule type" value="Genomic_DNA"/>
</dbReference>
<dbReference type="RefSeq" id="NP_044950.1">
    <property type="nucleotide sequence ID" value="NC_001835.1"/>
</dbReference>
<dbReference type="GeneID" id="1261302"/>
<dbReference type="KEGG" id="vg:1261302"/>
<dbReference type="Proteomes" id="UP000000839">
    <property type="component" value="Genome"/>
</dbReference>
<dbReference type="GO" id="GO:0019028">
    <property type="term" value="C:viral capsid"/>
    <property type="evidence" value="ECO:0007669"/>
    <property type="project" value="UniProtKB-KW"/>
</dbReference>
<dbReference type="GO" id="GO:0099001">
    <property type="term" value="P:symbiont genome ejection through host cell envelope, long flexible tail mechanism"/>
    <property type="evidence" value="ECO:0007669"/>
    <property type="project" value="UniProtKB-KW"/>
</dbReference>
<protein>
    <recommendedName>
        <fullName evidence="1">Probable portal protein</fullName>
    </recommendedName>
    <alternativeName>
        <fullName evidence="2">Gene product 4</fullName>
        <shortName evidence="2">gp4</shortName>
    </alternativeName>
    <alternativeName>
        <fullName evidence="1">Putative portal protein</fullName>
    </alternativeName>
</protein>
<name>PORTL_BPLSK</name>
<feature type="chain" id="PRO_0000438252" description="Probable portal protein">
    <location>
        <begin position="1"/>
        <end position="378"/>
    </location>
</feature>
<proteinExistence type="inferred from homology"/>
<accession>O21872</accession>
<keyword id="KW-0167">Capsid protein</keyword>
<keyword id="KW-1185">Reference proteome</keyword>
<keyword id="KW-0118">Viral capsid assembly</keyword>
<keyword id="KW-1171">Viral genome ejection through host cell envelope</keyword>
<keyword id="KW-0231">Viral genome packaging</keyword>
<keyword id="KW-1243">Viral long flexible tail ejection system</keyword>
<keyword id="KW-1162">Viral penetration into host cytoplasm</keyword>
<keyword id="KW-1188">Viral release from host cell</keyword>
<keyword id="KW-0946">Virion</keyword>
<keyword id="KW-1160">Virus entry into host cell</keyword>
<organism>
    <name type="scientific">Lactococcus phage SK1</name>
    <name type="common">Lactococcus lactis bacteriophage SK1</name>
    <dbReference type="NCBI Taxonomy" id="2905675"/>
    <lineage>
        <taxon>Viruses</taxon>
        <taxon>Duplodnaviria</taxon>
        <taxon>Heunggongvirae</taxon>
        <taxon>Uroviricota</taxon>
        <taxon>Caudoviricetes</taxon>
        <taxon>Skunavirus</taxon>
        <taxon>Skunavirus sk1</taxon>
    </lineage>
</organism>
<sequence length="378" mass="43276">MNLFGKVVSFSRGKLNNDTQRVTAWQNEAVEYTSAFVTNIHNKIANEITKVEFNHVKYKKSDVGSDTLISMAGSDLDEVLNWSPKGERNSMDFWRKVIKKLLRAPYVDLYAVFDDNTGELLDLLFADDKKEYKPEELVRLTSPFYINEDTSILDNALASIQTKLEQGKLRGLLKINAFLDIDNTQEYREKALTTIKNMQEGSSYNGLTPVDNKTEIVELKKDYSVLNKDEIDLIKSELLTGYFMNENILLGTASQEQQIYFYNSTIIPLLIQLEKELTYKLISTNRRRVVKGNLYYERIIVDNQLFKFATLKELIDLYHENINGPIFTQNQLLVKMGEQPIEGGDVYIANLNAVAVKNLSDLQGSRKDVTSTDETNNQ</sequence>
<organismHost>
    <name type="scientific">Lactococcus lactis</name>
    <dbReference type="NCBI Taxonomy" id="1358"/>
</organismHost>
<comment type="function">
    <text evidence="1">Forms the portal vertex of the capsid. This portal plays critical roles in head assembly, genome packaging, neck/tail attachment, and genome ejection. The portal protein multimerizes as a single ring-shaped homododecamer arranged around a central channel. Binds to the terminase subunits to form the packaging machine. Necessary to ensure correct procapsid size during capsid assembly. Once the capsid is packaged with the DNA, the terminase complex is substituted by the connector proteins gp15.</text>
</comment>
<comment type="subunit">
    <text evidence="1">Homododecamer.</text>
</comment>
<comment type="subcellular location">
    <subcellularLocation>
        <location evidence="1">Virion</location>
    </subcellularLocation>
    <text evidence="1">Occupies the twelfth vertex of the capsid.</text>
</comment>
<comment type="similarity">
    <text evidence="2">Belongs to the skunalikevirus portal protein family.</text>
</comment>